<keyword id="KW-0012">Acyltransferase</keyword>
<keyword id="KW-0963">Cytoplasm</keyword>
<keyword id="KW-0808">Transferase</keyword>
<name>LIPB_MYCBT</name>
<accession>C1AQD2</accession>
<sequence length="230" mass="24153">MTGSIRSKLSAIDVRQLGTVDYRTAWQLQRELADARVAGGADTLLLLEHPAVYTAGRRTETHERPIDGTPVVGTDRGGKITWHGPGQLVGYPIIGLAEPLDVVNYVRRLEESLIQVCADLGLHAGRVDGRSGVWLPGRPARKVAAIGVRVSRATTLHGFALNCDCDLAAFTAIVPCGISDAAVTSLSAELGRTVTVDEVRATVAAAVCAALDGVLPVGDRVPSHAVPSPL</sequence>
<feature type="chain" id="PRO_1000116549" description="Octanoyltransferase">
    <location>
        <begin position="1"/>
        <end position="230"/>
    </location>
</feature>
<feature type="domain" description="BPL/LPL catalytic" evidence="2">
    <location>
        <begin position="38"/>
        <end position="215"/>
    </location>
</feature>
<feature type="active site" description="Acyl-thioester intermediate" evidence="1">
    <location>
        <position position="176"/>
    </location>
</feature>
<feature type="binding site" evidence="1">
    <location>
        <begin position="76"/>
        <end position="83"/>
    </location>
    <ligand>
        <name>substrate</name>
    </ligand>
</feature>
<feature type="binding site" evidence="1">
    <location>
        <begin position="145"/>
        <end position="147"/>
    </location>
    <ligand>
        <name>substrate</name>
    </ligand>
</feature>
<feature type="binding site" evidence="1">
    <location>
        <begin position="158"/>
        <end position="160"/>
    </location>
    <ligand>
        <name>substrate</name>
    </ligand>
</feature>
<feature type="site" description="Lowers pKa of active site Cys" evidence="1">
    <location>
        <position position="142"/>
    </location>
</feature>
<proteinExistence type="inferred from homology"/>
<organism>
    <name type="scientific">Mycobacterium bovis (strain BCG / Tokyo 172 / ATCC 35737 / TMC 1019)</name>
    <dbReference type="NCBI Taxonomy" id="561275"/>
    <lineage>
        <taxon>Bacteria</taxon>
        <taxon>Bacillati</taxon>
        <taxon>Actinomycetota</taxon>
        <taxon>Actinomycetes</taxon>
        <taxon>Mycobacteriales</taxon>
        <taxon>Mycobacteriaceae</taxon>
        <taxon>Mycobacterium</taxon>
        <taxon>Mycobacterium tuberculosis complex</taxon>
    </lineage>
</organism>
<gene>
    <name evidence="1" type="primary">lipB</name>
    <name type="ordered locus">JTY_2227</name>
</gene>
<evidence type="ECO:0000255" key="1">
    <source>
        <dbReference type="HAMAP-Rule" id="MF_00013"/>
    </source>
</evidence>
<evidence type="ECO:0000255" key="2">
    <source>
        <dbReference type="PROSITE-ProRule" id="PRU01067"/>
    </source>
</evidence>
<comment type="function">
    <text evidence="1">Catalyzes the transfer of endogenously produced octanoic acid from octanoyl-acyl-carrier-protein onto the lipoyl domains of lipoate-dependent enzymes. Lipoyl-ACP can also act as a substrate although octanoyl-ACP is likely to be the physiological substrate.</text>
</comment>
<comment type="catalytic activity">
    <reaction evidence="1">
        <text>octanoyl-[ACP] + L-lysyl-[protein] = N(6)-octanoyl-L-lysyl-[protein] + holo-[ACP] + H(+)</text>
        <dbReference type="Rhea" id="RHEA:17665"/>
        <dbReference type="Rhea" id="RHEA-COMP:9636"/>
        <dbReference type="Rhea" id="RHEA-COMP:9685"/>
        <dbReference type="Rhea" id="RHEA-COMP:9752"/>
        <dbReference type="Rhea" id="RHEA-COMP:9928"/>
        <dbReference type="ChEBI" id="CHEBI:15378"/>
        <dbReference type="ChEBI" id="CHEBI:29969"/>
        <dbReference type="ChEBI" id="CHEBI:64479"/>
        <dbReference type="ChEBI" id="CHEBI:78463"/>
        <dbReference type="ChEBI" id="CHEBI:78809"/>
        <dbReference type="EC" id="2.3.1.181"/>
    </reaction>
</comment>
<comment type="pathway">
    <text evidence="1">Protein modification; protein lipoylation via endogenous pathway; protein N(6)-(lipoyl)lysine from octanoyl-[acyl-carrier-protein]: step 1/2.</text>
</comment>
<comment type="subcellular location">
    <subcellularLocation>
        <location evidence="1">Cytoplasm</location>
    </subcellularLocation>
</comment>
<comment type="miscellaneous">
    <text evidence="1">In the reaction, the free carboxyl group of octanoic acid is attached via an amide linkage to the epsilon-amino group of a specific lysine residue of lipoyl domains of lipoate-dependent enzymes.</text>
</comment>
<comment type="similarity">
    <text evidence="1">Belongs to the LipB family.</text>
</comment>
<reference key="1">
    <citation type="journal article" date="2009" name="Vaccine">
        <title>Whole genome sequence analysis of Mycobacterium bovis bacillus Calmette-Guerin (BCG) Tokyo 172: a comparative study of BCG vaccine substrains.</title>
        <authorList>
            <person name="Seki M."/>
            <person name="Honda I."/>
            <person name="Fujita I."/>
            <person name="Yano I."/>
            <person name="Yamamoto S."/>
            <person name="Koyama A."/>
        </authorList>
    </citation>
    <scope>NUCLEOTIDE SEQUENCE [LARGE SCALE GENOMIC DNA]</scope>
    <source>
        <strain>BCG / Tokyo 172 / ATCC 35737 / TMC 1019</strain>
    </source>
</reference>
<protein>
    <recommendedName>
        <fullName evidence="1">Octanoyltransferase</fullName>
        <ecNumber evidence="1">2.3.1.181</ecNumber>
    </recommendedName>
    <alternativeName>
        <fullName evidence="1">Lipoate-protein ligase B</fullName>
    </alternativeName>
    <alternativeName>
        <fullName evidence="1">Lipoyl/octanoyl transferase</fullName>
    </alternativeName>
    <alternativeName>
        <fullName evidence="1">Octanoyl-[acyl-carrier-protein]-protein N-octanoyltransferase</fullName>
    </alternativeName>
</protein>
<dbReference type="EC" id="2.3.1.181" evidence="1"/>
<dbReference type="EMBL" id="AP010918">
    <property type="protein sequence ID" value="BAH26511.1"/>
    <property type="molecule type" value="Genomic_DNA"/>
</dbReference>
<dbReference type="RefSeq" id="WP_010950674.1">
    <property type="nucleotide sequence ID" value="NZ_CP014566.1"/>
</dbReference>
<dbReference type="SMR" id="C1AQD2"/>
<dbReference type="KEGG" id="mbt:JTY_2227"/>
<dbReference type="HOGENOM" id="CLU_035168_2_1_11"/>
<dbReference type="UniPathway" id="UPA00538">
    <property type="reaction ID" value="UER00592"/>
</dbReference>
<dbReference type="GO" id="GO:0005737">
    <property type="term" value="C:cytoplasm"/>
    <property type="evidence" value="ECO:0007669"/>
    <property type="project" value="UniProtKB-SubCell"/>
</dbReference>
<dbReference type="GO" id="GO:0033819">
    <property type="term" value="F:lipoyl(octanoyl) transferase activity"/>
    <property type="evidence" value="ECO:0007669"/>
    <property type="project" value="UniProtKB-EC"/>
</dbReference>
<dbReference type="GO" id="GO:0036211">
    <property type="term" value="P:protein modification process"/>
    <property type="evidence" value="ECO:0007669"/>
    <property type="project" value="InterPro"/>
</dbReference>
<dbReference type="CDD" id="cd16444">
    <property type="entry name" value="LipB"/>
    <property type="match status" value="1"/>
</dbReference>
<dbReference type="FunFam" id="3.30.930.10:FF:000035">
    <property type="entry name" value="Putative lipoyltransferase 2, mitochondrial"/>
    <property type="match status" value="1"/>
</dbReference>
<dbReference type="Gene3D" id="3.30.930.10">
    <property type="entry name" value="Bira Bifunctional Protein, Domain 2"/>
    <property type="match status" value="1"/>
</dbReference>
<dbReference type="HAMAP" id="MF_00013">
    <property type="entry name" value="LipB"/>
    <property type="match status" value="1"/>
</dbReference>
<dbReference type="InterPro" id="IPR045864">
    <property type="entry name" value="aa-tRNA-synth_II/BPL/LPL"/>
</dbReference>
<dbReference type="InterPro" id="IPR004143">
    <property type="entry name" value="BPL_LPL_catalytic"/>
</dbReference>
<dbReference type="InterPro" id="IPR000544">
    <property type="entry name" value="Octanoyltransferase"/>
</dbReference>
<dbReference type="InterPro" id="IPR020605">
    <property type="entry name" value="Octanoyltransferase_CS"/>
</dbReference>
<dbReference type="NCBIfam" id="TIGR00214">
    <property type="entry name" value="lipB"/>
    <property type="match status" value="1"/>
</dbReference>
<dbReference type="NCBIfam" id="NF010925">
    <property type="entry name" value="PRK14345.1"/>
    <property type="match status" value="1"/>
</dbReference>
<dbReference type="PANTHER" id="PTHR10993:SF7">
    <property type="entry name" value="LIPOYLTRANSFERASE 2, MITOCHONDRIAL-RELATED"/>
    <property type="match status" value="1"/>
</dbReference>
<dbReference type="PANTHER" id="PTHR10993">
    <property type="entry name" value="OCTANOYLTRANSFERASE"/>
    <property type="match status" value="1"/>
</dbReference>
<dbReference type="Pfam" id="PF21948">
    <property type="entry name" value="LplA-B_cat"/>
    <property type="match status" value="1"/>
</dbReference>
<dbReference type="PIRSF" id="PIRSF016262">
    <property type="entry name" value="LPLase"/>
    <property type="match status" value="1"/>
</dbReference>
<dbReference type="SUPFAM" id="SSF55681">
    <property type="entry name" value="Class II aaRS and biotin synthetases"/>
    <property type="match status" value="1"/>
</dbReference>
<dbReference type="PROSITE" id="PS51733">
    <property type="entry name" value="BPL_LPL_CATALYTIC"/>
    <property type="match status" value="1"/>
</dbReference>
<dbReference type="PROSITE" id="PS01313">
    <property type="entry name" value="LIPB"/>
    <property type="match status" value="1"/>
</dbReference>